<organism evidence="17">
    <name type="scientific">Arabidopsis thaliana</name>
    <name type="common">Mouse-ear cress</name>
    <dbReference type="NCBI Taxonomy" id="3702"/>
    <lineage>
        <taxon>Eukaryota</taxon>
        <taxon>Viridiplantae</taxon>
        <taxon>Streptophyta</taxon>
        <taxon>Embryophyta</taxon>
        <taxon>Tracheophyta</taxon>
        <taxon>Spermatophyta</taxon>
        <taxon>Magnoliopsida</taxon>
        <taxon>eudicotyledons</taxon>
        <taxon>Gunneridae</taxon>
        <taxon>Pentapetalae</taxon>
        <taxon>rosids</taxon>
        <taxon>malvids</taxon>
        <taxon>Brassicales</taxon>
        <taxon>Brassicaceae</taxon>
        <taxon>Camelineae</taxon>
        <taxon>Arabidopsis</taxon>
    </lineage>
</organism>
<comment type="function">
    <text evidence="3 8 9 10">Involved in the differentiation of epidermal cells, probably via the regulation of the expression of meristem-related genes (e.g. CLV3, STM, KNAT1, CUC2 and AG) and of leaf polarity-related genes (e.g. YAB5, FIL, AS2, PHB and PHV) (PubMed:22058024, PubMed:22357616). May play a role in regulating cellular proliferation (By similarity). Necessary for flower development, probably by preventing apical dominance through the down-regulation of AG expression (PubMed:22357616). Required for embryogenesis, leaf and cotyledon development, as well as for leaf polarity establishment (PubMed:22058024). Plays an important role in plant growth and senescence by modulating ribosome biogenesis in nucleolus. Possesses GTPAse activity in vitro. Possesses RNA binding activity in vitro. Associates with ribosomes (PubMed:26163696).</text>
</comment>
<comment type="subunit">
    <text evidence="10">Interacts with EBP2 and PES.</text>
</comment>
<comment type="subcellular location">
    <subcellularLocation>
        <location evidence="5">Nucleus</location>
    </subcellularLocation>
    <subcellularLocation>
        <location evidence="9 10">Nucleus</location>
        <location evidence="9 10">Nucleolus</location>
    </subcellularLocation>
    <text evidence="2">Shuttles between the nucleus and nucleolus.</text>
</comment>
<comment type="tissue specificity">
    <text evidence="9">Mostly expressed in flowers, siliques and inflorescence apex, and, to a lower extent, in stems and leaves.</text>
</comment>
<comment type="developmental stage">
    <text evidence="8 9">Accumulates in developing embryos and in the primordia of cotyledons and leaves (PubMed:22058024). Accumulates mostly in the inflorescence meristem and in floral primordia. Low levels in the inflorescence meristem dome, but high levels in the floral primordia already in early stages. Accumulates progressively in floral organ primordia to become concentrated in the primordia of stamens and carpels. At the later stages of floral development, expressed primarily in developing microspores in the stamens and ovules in the carpels (PubMed:22357616).</text>
</comment>
<comment type="domain">
    <text evidence="2">The basic domain (B) allows nucleolar localization in the absence of GTP. The intermediate domain (I) inhibits nucleolar localization by the B domain and is required for exit from the nucleolus. Exit from the nucleolus to the nucleoplasm requires both the I and the acidic (A) domains, and may be triggered by GTP hydrolysis.</text>
</comment>
<comment type="domain">
    <text evidence="13">In contrast to other GTP-binding proteins, this family is characterized by a circular permutation of the GTPase motifs described by a G4-G1-G3 pattern.</text>
</comment>
<comment type="domain">
    <text evidence="14">The DARXP motif is also sometime designated as G6 region.</text>
</comment>
<comment type="disruption phenotype">
    <text evidence="8 9">Dwarf with severe defects in reproduction, eventual arrest in embryo development that can occur at any stage of embryogenesis, distorted cotyledons, and upward curled leaves probably due to disoriented leaf polarity. Ectopic meristem-like outgrowths on the surface of cotyledons and leaves (PubMed:22058024). Abnormal expression of meristem-related genes and of leaf polarity-related genes (PubMed:22058024, PubMed:22357616). Heterozygote plants develop defective flowers and siliques on inflorescences sometimes terminated by the formation of carpelloid flower, and thus leading to a highly reduced self-fertility (PubMed:22357616).</text>
</comment>
<comment type="similarity">
    <text evidence="6">Belongs to the TRAFAC class YlqF/YawG GTPase family.</text>
</comment>
<comment type="sequence caution" evidence="13">
    <conflict type="frameshift">
        <sequence resource="EMBL-CDS" id="AAK96878"/>
    </conflict>
</comment>
<keyword id="KW-0175">Coiled coil</keyword>
<keyword id="KW-0217">Developmental protein</keyword>
<keyword id="KW-0342">GTP-binding</keyword>
<keyword id="KW-0547">Nucleotide-binding</keyword>
<keyword id="KW-0539">Nucleus</keyword>
<keyword id="KW-1185">Reference proteome</keyword>
<keyword id="KW-0677">Repeat</keyword>
<evidence type="ECO:0000250" key="1">
    <source>
        <dbReference type="UniProtKB" id="O31743"/>
    </source>
</evidence>
<evidence type="ECO:0000250" key="2">
    <source>
        <dbReference type="UniProtKB" id="Q811S9"/>
    </source>
</evidence>
<evidence type="ECO:0000250" key="3">
    <source>
        <dbReference type="UniProtKB" id="Q8MT06"/>
    </source>
</evidence>
<evidence type="ECO:0000255" key="4"/>
<evidence type="ECO:0000255" key="5">
    <source>
        <dbReference type="PROSITE-ProRule" id="PRU00768"/>
    </source>
</evidence>
<evidence type="ECO:0000255" key="6">
    <source>
        <dbReference type="PROSITE-ProRule" id="PRU01058"/>
    </source>
</evidence>
<evidence type="ECO:0000256" key="7">
    <source>
        <dbReference type="SAM" id="MobiDB-lite"/>
    </source>
</evidence>
<evidence type="ECO:0000269" key="8">
    <source>
    </source>
</evidence>
<evidence type="ECO:0000269" key="9">
    <source>
    </source>
</evidence>
<evidence type="ECO:0000269" key="10">
    <source>
    </source>
</evidence>
<evidence type="ECO:0000303" key="11">
    <source>
    </source>
</evidence>
<evidence type="ECO:0000303" key="12">
    <source>
    </source>
</evidence>
<evidence type="ECO:0000305" key="13"/>
<evidence type="ECO:0000305" key="14">
    <source>
    </source>
</evidence>
<evidence type="ECO:0000312" key="15">
    <source>
        <dbReference type="Araport" id="AT3G07050"/>
    </source>
</evidence>
<evidence type="ECO:0000312" key="16">
    <source>
        <dbReference type="EMBL" id="AAF27009.1"/>
    </source>
</evidence>
<evidence type="ECO:0000312" key="17">
    <source>
        <dbReference type="Proteomes" id="UP000006548"/>
    </source>
</evidence>
<protein>
    <recommendedName>
        <fullName evidence="13">Guanine nucleotide-binding protein-like NSN1</fullName>
        <shortName evidence="13">Nucleolar GTP-binding protein NSN1</shortName>
    </recommendedName>
    <alternativeName>
        <fullName evidence="11">DAR GTPase 4</fullName>
    </alternativeName>
    <alternativeName>
        <fullName evidence="12">Protein nucleostemin-like 1</fullName>
    </alternativeName>
</protein>
<name>NSN1_ARATH</name>
<proteinExistence type="evidence at protein level"/>
<reference key="1">
    <citation type="journal article" date="2012" name="Mol. Biol. Cell">
        <title>A nucleostemin-like GTPase required for normal apical and floral meristem development in Arabidopsis.</title>
        <authorList>
            <person name="Wang X."/>
            <person name="Gingrich D.K."/>
            <person name="Deng Y."/>
            <person name="Hong Z."/>
        </authorList>
    </citation>
    <scope>NUCLEOTIDE SEQUENCE [MRNA]</scope>
    <scope>FUNCTION</scope>
    <scope>DEVELOPMENTAL STAGE</scope>
    <scope>DISRUPTION PHENOTYPE</scope>
    <scope>SUBCELLULAR LOCATION</scope>
    <scope>TISSUE SPECIFICITY</scope>
    <source>
        <strain>cv. Columbia</strain>
    </source>
</reference>
<reference key="2">
    <citation type="journal article" date="2000" name="Nature">
        <title>Sequence and analysis of chromosome 3 of the plant Arabidopsis thaliana.</title>
        <authorList>
            <person name="Salanoubat M."/>
            <person name="Lemcke K."/>
            <person name="Rieger M."/>
            <person name="Ansorge W."/>
            <person name="Unseld M."/>
            <person name="Fartmann B."/>
            <person name="Valle G."/>
            <person name="Bloecker H."/>
            <person name="Perez-Alonso M."/>
            <person name="Obermaier B."/>
            <person name="Delseny M."/>
            <person name="Boutry M."/>
            <person name="Grivell L.A."/>
            <person name="Mache R."/>
            <person name="Puigdomenech P."/>
            <person name="De Simone V."/>
            <person name="Choisne N."/>
            <person name="Artiguenave F."/>
            <person name="Robert C."/>
            <person name="Brottier P."/>
            <person name="Wincker P."/>
            <person name="Cattolico L."/>
            <person name="Weissenbach J."/>
            <person name="Saurin W."/>
            <person name="Quetier F."/>
            <person name="Schaefer M."/>
            <person name="Mueller-Auer S."/>
            <person name="Gabel C."/>
            <person name="Fuchs M."/>
            <person name="Benes V."/>
            <person name="Wurmbach E."/>
            <person name="Drzonek H."/>
            <person name="Erfle H."/>
            <person name="Jordan N."/>
            <person name="Bangert S."/>
            <person name="Wiedelmann R."/>
            <person name="Kranz H."/>
            <person name="Voss H."/>
            <person name="Holland R."/>
            <person name="Brandt P."/>
            <person name="Nyakatura G."/>
            <person name="Vezzi A."/>
            <person name="D'Angelo M."/>
            <person name="Pallavicini A."/>
            <person name="Toppo S."/>
            <person name="Simionati B."/>
            <person name="Conrad A."/>
            <person name="Hornischer K."/>
            <person name="Kauer G."/>
            <person name="Loehnert T.-H."/>
            <person name="Nordsiek G."/>
            <person name="Reichelt J."/>
            <person name="Scharfe M."/>
            <person name="Schoen O."/>
            <person name="Bargues M."/>
            <person name="Terol J."/>
            <person name="Climent J."/>
            <person name="Navarro P."/>
            <person name="Collado C."/>
            <person name="Perez-Perez A."/>
            <person name="Ottenwaelder B."/>
            <person name="Duchemin D."/>
            <person name="Cooke R."/>
            <person name="Laudie M."/>
            <person name="Berger-Llauro C."/>
            <person name="Purnelle B."/>
            <person name="Masuy D."/>
            <person name="de Haan M."/>
            <person name="Maarse A.C."/>
            <person name="Alcaraz J.-P."/>
            <person name="Cottet A."/>
            <person name="Casacuberta E."/>
            <person name="Monfort A."/>
            <person name="Argiriou A."/>
            <person name="Flores M."/>
            <person name="Liguori R."/>
            <person name="Vitale D."/>
            <person name="Mannhaupt G."/>
            <person name="Haase D."/>
            <person name="Schoof H."/>
            <person name="Rudd S."/>
            <person name="Zaccaria P."/>
            <person name="Mewes H.-W."/>
            <person name="Mayer K.F.X."/>
            <person name="Kaul S."/>
            <person name="Town C.D."/>
            <person name="Koo H.L."/>
            <person name="Tallon L.J."/>
            <person name="Jenkins J."/>
            <person name="Rooney T."/>
            <person name="Rizzo M."/>
            <person name="Walts A."/>
            <person name="Utterback T."/>
            <person name="Fujii C.Y."/>
            <person name="Shea T.P."/>
            <person name="Creasy T.H."/>
            <person name="Haas B."/>
            <person name="Maiti R."/>
            <person name="Wu D."/>
            <person name="Peterson J."/>
            <person name="Van Aken S."/>
            <person name="Pai G."/>
            <person name="Militscher J."/>
            <person name="Sellers P."/>
            <person name="Gill J.E."/>
            <person name="Feldblyum T.V."/>
            <person name="Preuss D."/>
            <person name="Lin X."/>
            <person name="Nierman W.C."/>
            <person name="Salzberg S.L."/>
            <person name="White O."/>
            <person name="Venter J.C."/>
            <person name="Fraser C.M."/>
            <person name="Kaneko T."/>
            <person name="Nakamura Y."/>
            <person name="Sato S."/>
            <person name="Kato T."/>
            <person name="Asamizu E."/>
            <person name="Sasamoto S."/>
            <person name="Kimura T."/>
            <person name="Idesawa K."/>
            <person name="Kawashima K."/>
            <person name="Kishida Y."/>
            <person name="Kiyokawa C."/>
            <person name="Kohara M."/>
            <person name="Matsumoto M."/>
            <person name="Matsuno A."/>
            <person name="Muraki A."/>
            <person name="Nakayama S."/>
            <person name="Nakazaki N."/>
            <person name="Shinpo S."/>
            <person name="Takeuchi C."/>
            <person name="Wada T."/>
            <person name="Watanabe A."/>
            <person name="Yamada M."/>
            <person name="Yasuda M."/>
            <person name="Tabata S."/>
        </authorList>
    </citation>
    <scope>NUCLEOTIDE SEQUENCE [LARGE SCALE GENOMIC DNA]</scope>
    <source>
        <strain>cv. Columbia</strain>
    </source>
</reference>
<reference key="3">
    <citation type="journal article" date="2017" name="Plant J.">
        <title>Araport11: a complete reannotation of the Arabidopsis thaliana reference genome.</title>
        <authorList>
            <person name="Cheng C.Y."/>
            <person name="Krishnakumar V."/>
            <person name="Chan A.P."/>
            <person name="Thibaud-Nissen F."/>
            <person name="Schobel S."/>
            <person name="Town C.D."/>
        </authorList>
    </citation>
    <scope>GENOME REANNOTATION</scope>
    <source>
        <strain>cv. Columbia</strain>
    </source>
</reference>
<reference key="4">
    <citation type="journal article" date="2003" name="Science">
        <title>Empirical analysis of transcriptional activity in the Arabidopsis genome.</title>
        <authorList>
            <person name="Yamada K."/>
            <person name="Lim J."/>
            <person name="Dale J.M."/>
            <person name="Chen H."/>
            <person name="Shinn P."/>
            <person name="Palm C.J."/>
            <person name="Southwick A.M."/>
            <person name="Wu H.C."/>
            <person name="Kim C.J."/>
            <person name="Nguyen M."/>
            <person name="Pham P.K."/>
            <person name="Cheuk R.F."/>
            <person name="Karlin-Newmann G."/>
            <person name="Liu S.X."/>
            <person name="Lam B."/>
            <person name="Sakano H."/>
            <person name="Wu T."/>
            <person name="Yu G."/>
            <person name="Miranda M."/>
            <person name="Quach H.L."/>
            <person name="Tripp M."/>
            <person name="Chang C.H."/>
            <person name="Lee J.M."/>
            <person name="Toriumi M.J."/>
            <person name="Chan M.M."/>
            <person name="Tang C.C."/>
            <person name="Onodera C.S."/>
            <person name="Deng J.M."/>
            <person name="Akiyama K."/>
            <person name="Ansari Y."/>
            <person name="Arakawa T."/>
            <person name="Banh J."/>
            <person name="Banno F."/>
            <person name="Bowser L."/>
            <person name="Brooks S.Y."/>
            <person name="Carninci P."/>
            <person name="Chao Q."/>
            <person name="Choy N."/>
            <person name="Enju A."/>
            <person name="Goldsmith A.D."/>
            <person name="Gurjal M."/>
            <person name="Hansen N.F."/>
            <person name="Hayashizaki Y."/>
            <person name="Johnson-Hopson C."/>
            <person name="Hsuan V.W."/>
            <person name="Iida K."/>
            <person name="Karnes M."/>
            <person name="Khan S."/>
            <person name="Koesema E."/>
            <person name="Ishida J."/>
            <person name="Jiang P.X."/>
            <person name="Jones T."/>
            <person name="Kawai J."/>
            <person name="Kamiya A."/>
            <person name="Meyers C."/>
            <person name="Nakajima M."/>
            <person name="Narusaka M."/>
            <person name="Seki M."/>
            <person name="Sakurai T."/>
            <person name="Satou M."/>
            <person name="Tamse R."/>
            <person name="Vaysberg M."/>
            <person name="Wallender E.K."/>
            <person name="Wong C."/>
            <person name="Yamamura Y."/>
            <person name="Yuan S."/>
            <person name="Shinozaki K."/>
            <person name="Davis R.W."/>
            <person name="Theologis A."/>
            <person name="Ecker J.R."/>
        </authorList>
    </citation>
    <scope>NUCLEOTIDE SEQUENCE [LARGE SCALE MRNA] OF 1-531</scope>
    <source>
        <strain>cv. Columbia</strain>
    </source>
</reference>
<reference key="5">
    <citation type="journal article" date="1998" name="Gene">
        <title>Analysis of the genomic organisation of a small chromosome of Leishmania braziliensis M2903 reveals two genes encoding GTP-binding proteins, one of which belongs to a new G-protein family and is an antigen.</title>
        <authorList>
            <person name="Fu G."/>
            <person name="Melville S."/>
            <person name="Brewster S."/>
            <person name="Warner J."/>
            <person name="Barker D.C."/>
        </authorList>
    </citation>
    <scope>DOMAIN</scope>
    <scope>GENE FAMILY</scope>
</reference>
<reference key="6">
    <citation type="journal article" date="2006" name="Genetics">
        <title>Arabidopsis SHORT INTEGUMENTS 2 is a mitochondrial DAR GTPase.</title>
        <authorList>
            <person name="Hill T.A."/>
            <person name="Broadhvest J."/>
            <person name="Kuzoff R.K."/>
            <person name="Gasser C.S."/>
        </authorList>
    </citation>
    <scope>GENE FAMILY</scope>
    <scope>NOMENCLATURE</scope>
</reference>
<reference key="7">
    <citation type="journal article" date="2012" name="Plant Mol. Biol.">
        <title>Nucleostemin-like 1 is required for embryogenesis and leaf development in Arabidopsis.</title>
        <authorList>
            <person name="Wang X."/>
            <person name="Xie B."/>
            <person name="Zhu M."/>
            <person name="Zhang Z."/>
            <person name="Hong Z."/>
        </authorList>
    </citation>
    <scope>FUNCTION</scope>
    <scope>DISRUPTION PHENOTYPE</scope>
    <scope>DEVELOPMENTAL STAGE</scope>
    <source>
        <strain>cv. Columbia</strain>
    </source>
</reference>
<reference key="8">
    <citation type="journal article" date="2015" name="J. Exp. Bot.">
        <title>The nucleolar GTPase nucleostemin-like 1 plays a role in plant growth and senescence by modulating ribosome biogenesis.</title>
        <authorList>
            <person name="Jeon Y."/>
            <person name="Park Y.J."/>
            <person name="Cho H.K."/>
            <person name="Jung H.J."/>
            <person name="Ahn T.K."/>
            <person name="Kang H."/>
            <person name="Pai H.S."/>
        </authorList>
    </citation>
    <scope>FUNCTION</scope>
    <scope>INTERACTION WITH EBP2 AND PES</scope>
    <scope>SUBCELLULAR LOCATION</scope>
</reference>
<sequence length="582" mass="65786">MVKRSKKSKSKRVTLKQKHKVLKKVKEHHKKKAKDAKKLGLHRKPRVEKDPGIPNDWPFKEQELKALEVRRARALEEIEQKKEARKERAKKRKLGLVDDEDTKTEGETIEDLPKVVNVRDNSERAFYKELVKVIELSDVILEVLDARDPLGTRCTDMERMVMQAGPNKHLVLLLNKIDLVPREAAEKWLMYLREEFPAVAFKCSTQEQRSNLGWKSSKASKPSNMLQTSDCLGADTLIKLLKNYSRSHELKKSITVGIIGLPNVGKSSLINSLKRAHVVNVGATPGLTRSLQEVHLDKNVKLLDCPGVVMLKSSGNDASIALRNCKRIEKLDDPVSPVKEILKLCPKDMLVTLYKIPSFEAVDDFLYKVATVRGKLKKGGLVDIDAAARIVLHDWNEGKIPYYTMPPKRDQGGHAESKIVTELAKDFNIDEVYSGESSFIGSLKTVNEFNPVIIPSNGPLNFDETMIEDESKTQTEEEAEHESDDDESMGGEEEEEAGKTKEKSETGRQNVKLYAAESMLNTKKQKAEKKKRKKAKKAGADEEDLMDGDYDFKVDYRKNKDGEDEEFQIDAKIPMAGLLPEE</sequence>
<dbReference type="EMBL" id="JX644918">
    <property type="protein sequence ID" value="AFW99797.1"/>
    <property type="molecule type" value="mRNA"/>
</dbReference>
<dbReference type="EMBL" id="AC016827">
    <property type="protein sequence ID" value="AAF27009.1"/>
    <property type="molecule type" value="Genomic_DNA"/>
</dbReference>
<dbReference type="EMBL" id="CP002686">
    <property type="protein sequence ID" value="AEE74493.1"/>
    <property type="molecule type" value="Genomic_DNA"/>
</dbReference>
<dbReference type="EMBL" id="AY054687">
    <property type="protein sequence ID" value="AAK96878.1"/>
    <property type="status" value="ALT_FRAME"/>
    <property type="molecule type" value="mRNA"/>
</dbReference>
<dbReference type="RefSeq" id="NP_187361.1">
    <property type="nucleotide sequence ID" value="NM_111585.5"/>
</dbReference>
<dbReference type="SMR" id="Q9M8Z5"/>
<dbReference type="BioGRID" id="5225">
    <property type="interactions" value="1"/>
</dbReference>
<dbReference type="FunCoup" id="Q9M8Z5">
    <property type="interactions" value="3916"/>
</dbReference>
<dbReference type="STRING" id="3702.Q9M8Z5"/>
<dbReference type="GlyGen" id="Q9M8Z5">
    <property type="glycosylation" value="1 site"/>
</dbReference>
<dbReference type="iPTMnet" id="Q9M8Z5"/>
<dbReference type="PaxDb" id="3702-AT3G07050.1"/>
<dbReference type="ProteomicsDB" id="249132"/>
<dbReference type="EnsemblPlants" id="AT3G07050.1">
    <property type="protein sequence ID" value="AT3G07050.1"/>
    <property type="gene ID" value="AT3G07050"/>
</dbReference>
<dbReference type="GeneID" id="819890"/>
<dbReference type="Gramene" id="AT3G07050.1">
    <property type="protein sequence ID" value="AT3G07050.1"/>
    <property type="gene ID" value="AT3G07050"/>
</dbReference>
<dbReference type="KEGG" id="ath:AT3G07050"/>
<dbReference type="Araport" id="AT3G07050"/>
<dbReference type="TAIR" id="AT3G07050">
    <property type="gene designation" value="NSN1"/>
</dbReference>
<dbReference type="eggNOG" id="KOG2484">
    <property type="taxonomic scope" value="Eukaryota"/>
</dbReference>
<dbReference type="HOGENOM" id="CLU_011106_5_0_1"/>
<dbReference type="InParanoid" id="Q9M8Z5"/>
<dbReference type="OMA" id="FKLDGLW"/>
<dbReference type="PhylomeDB" id="Q9M8Z5"/>
<dbReference type="CD-CODE" id="4299E36E">
    <property type="entry name" value="Nucleolus"/>
</dbReference>
<dbReference type="PRO" id="PR:Q9M8Z5"/>
<dbReference type="Proteomes" id="UP000006548">
    <property type="component" value="Chromosome 3"/>
</dbReference>
<dbReference type="ExpressionAtlas" id="Q9M8Z5">
    <property type="expression patterns" value="baseline and differential"/>
</dbReference>
<dbReference type="GO" id="GO:0005730">
    <property type="term" value="C:nucleolus"/>
    <property type="evidence" value="ECO:0000314"/>
    <property type="project" value="TAIR"/>
</dbReference>
<dbReference type="GO" id="GO:0009506">
    <property type="term" value="C:plasmodesma"/>
    <property type="evidence" value="ECO:0007005"/>
    <property type="project" value="TAIR"/>
</dbReference>
<dbReference type="GO" id="GO:0005525">
    <property type="term" value="F:GTP binding"/>
    <property type="evidence" value="ECO:0007669"/>
    <property type="project" value="UniProtKB-KW"/>
</dbReference>
<dbReference type="GO" id="GO:0003729">
    <property type="term" value="F:mRNA binding"/>
    <property type="evidence" value="ECO:0000314"/>
    <property type="project" value="TAIR"/>
</dbReference>
<dbReference type="GO" id="GO:0048825">
    <property type="term" value="P:cotyledon development"/>
    <property type="evidence" value="ECO:0000315"/>
    <property type="project" value="UniProtKB"/>
</dbReference>
<dbReference type="GO" id="GO:0048444">
    <property type="term" value="P:floral organ morphogenesis"/>
    <property type="evidence" value="ECO:0000315"/>
    <property type="project" value="TAIR"/>
</dbReference>
<dbReference type="GO" id="GO:0010077">
    <property type="term" value="P:maintenance of inflorescence meristem identity"/>
    <property type="evidence" value="ECO:0000315"/>
    <property type="project" value="TAIR"/>
</dbReference>
<dbReference type="GO" id="GO:0045892">
    <property type="term" value="P:negative regulation of DNA-templated transcription"/>
    <property type="evidence" value="ECO:0000315"/>
    <property type="project" value="TAIR"/>
</dbReference>
<dbReference type="GO" id="GO:0045995">
    <property type="term" value="P:regulation of embryonic development"/>
    <property type="evidence" value="ECO:0000315"/>
    <property type="project" value="UniProtKB"/>
</dbReference>
<dbReference type="GO" id="GO:0045604">
    <property type="term" value="P:regulation of epidermal cell differentiation"/>
    <property type="evidence" value="ECO:0000315"/>
    <property type="project" value="UniProtKB"/>
</dbReference>
<dbReference type="GO" id="GO:2000024">
    <property type="term" value="P:regulation of leaf development"/>
    <property type="evidence" value="ECO:0000315"/>
    <property type="project" value="UniProtKB"/>
</dbReference>
<dbReference type="CDD" id="cd04178">
    <property type="entry name" value="Nucleostemin_like"/>
    <property type="match status" value="1"/>
</dbReference>
<dbReference type="FunFam" id="1.10.1580.10:FF:000002">
    <property type="entry name" value="Guanine nucleotide-binding protein-like 3 (nucleolar)-like"/>
    <property type="match status" value="1"/>
</dbReference>
<dbReference type="FunFam" id="3.40.50.300:FF:000571">
    <property type="entry name" value="Guanine nucleotide-binding protein-like NSN1"/>
    <property type="match status" value="1"/>
</dbReference>
<dbReference type="Gene3D" id="1.10.1580.10">
    <property type="match status" value="1"/>
</dbReference>
<dbReference type="Gene3D" id="3.40.50.300">
    <property type="entry name" value="P-loop containing nucleotide triphosphate hydrolases"/>
    <property type="match status" value="1"/>
</dbReference>
<dbReference type="InterPro" id="IPR030378">
    <property type="entry name" value="G_CP_dom"/>
</dbReference>
<dbReference type="InterPro" id="IPR014813">
    <property type="entry name" value="Gnl3_N_dom"/>
</dbReference>
<dbReference type="InterPro" id="IPR006073">
    <property type="entry name" value="GTP-bd"/>
</dbReference>
<dbReference type="InterPro" id="IPR023179">
    <property type="entry name" value="GTP-bd_ortho_bundle_sf"/>
</dbReference>
<dbReference type="InterPro" id="IPR027417">
    <property type="entry name" value="P-loop_NTPase"/>
</dbReference>
<dbReference type="InterPro" id="IPR050755">
    <property type="entry name" value="TRAFAC_YlqF/YawG_RiboMat"/>
</dbReference>
<dbReference type="PANTHER" id="PTHR11089">
    <property type="entry name" value="GTP-BINDING PROTEIN-RELATED"/>
    <property type="match status" value="1"/>
</dbReference>
<dbReference type="PANTHER" id="PTHR11089:SF30">
    <property type="entry name" value="GUANINE NUCLEOTIDE-BINDING PROTEIN-LIKE 3 HOMOLOG"/>
    <property type="match status" value="1"/>
</dbReference>
<dbReference type="Pfam" id="PF08701">
    <property type="entry name" value="GN3L_Grn1"/>
    <property type="match status" value="1"/>
</dbReference>
<dbReference type="Pfam" id="PF01926">
    <property type="entry name" value="MMR_HSR1"/>
    <property type="match status" value="1"/>
</dbReference>
<dbReference type="PRINTS" id="PR00326">
    <property type="entry name" value="GTP1OBG"/>
</dbReference>
<dbReference type="SUPFAM" id="SSF52540">
    <property type="entry name" value="P-loop containing nucleoside triphosphate hydrolases"/>
    <property type="match status" value="1"/>
</dbReference>
<dbReference type="PROSITE" id="PS51721">
    <property type="entry name" value="G_CP"/>
    <property type="match status" value="1"/>
</dbReference>
<gene>
    <name evidence="12" type="primary">NSN1</name>
    <name evidence="11" type="synonym">DGP4</name>
    <name evidence="15" type="ordered locus">At3g07050</name>
    <name evidence="16" type="ORF">F17A9.21</name>
</gene>
<feature type="chain" id="PRO_0000431376" description="Guanine nucleotide-binding protein-like NSN1">
    <location>
        <begin position="1"/>
        <end position="582"/>
    </location>
</feature>
<feature type="domain" description="CP-type G" evidence="6">
    <location>
        <begin position="127"/>
        <end position="311"/>
    </location>
</feature>
<feature type="region of interest" description="Disordered" evidence="7">
    <location>
        <begin position="1"/>
        <end position="58"/>
    </location>
</feature>
<feature type="region of interest" description="Basic" evidence="2">
    <location>
        <begin position="2"/>
        <end position="49"/>
    </location>
</feature>
<feature type="region of interest" description="G4" evidence="6">
    <location>
        <begin position="175"/>
        <end position="178"/>
    </location>
</feature>
<feature type="region of interest" description="G5" evidence="6">
    <location>
        <begin position="202"/>
        <end position="204"/>
    </location>
</feature>
<feature type="region of interest" description="G1" evidence="6">
    <location>
        <begin position="260"/>
        <end position="267"/>
    </location>
</feature>
<feature type="region of interest" description="Intermediate" evidence="2">
    <location>
        <begin position="281"/>
        <end position="456"/>
    </location>
</feature>
<feature type="region of interest" description="G2" evidence="6">
    <location>
        <begin position="286"/>
        <end position="290"/>
    </location>
</feature>
<feature type="region of interest" description="G3" evidence="6">
    <location>
        <begin position="304"/>
        <end position="307"/>
    </location>
</feature>
<feature type="region of interest" description="Acidic" evidence="2">
    <location>
        <begin position="463"/>
        <end position="551"/>
    </location>
</feature>
<feature type="region of interest" description="Disordered" evidence="7">
    <location>
        <begin position="469"/>
        <end position="545"/>
    </location>
</feature>
<feature type="coiled-coil region" evidence="4">
    <location>
        <begin position="15"/>
        <end position="94"/>
    </location>
</feature>
<feature type="coiled-coil region" evidence="4">
    <location>
        <begin position="515"/>
        <end position="537"/>
    </location>
</feature>
<feature type="short sequence motif" description="Nuclear localization signal 1" evidence="5">
    <location>
        <begin position="5"/>
        <end position="12"/>
    </location>
</feature>
<feature type="short sequence motif" description="Nuclear localization signal 2" evidence="5">
    <location>
        <begin position="22"/>
        <end position="29"/>
    </location>
</feature>
<feature type="short sequence motif" description="Nuclear localization signal 3" evidence="5">
    <location>
        <begin position="69"/>
        <end position="76"/>
    </location>
</feature>
<feature type="short sequence motif" description="DARXP motif">
    <location>
        <begin position="145"/>
        <end position="149"/>
    </location>
</feature>
<feature type="short sequence motif" description="Nuclear localization signal 4" evidence="5">
    <location>
        <begin position="522"/>
        <end position="529"/>
    </location>
</feature>
<feature type="compositionally biased region" description="Basic residues" evidence="7">
    <location>
        <begin position="1"/>
        <end position="46"/>
    </location>
</feature>
<feature type="compositionally biased region" description="Acidic residues" evidence="7">
    <location>
        <begin position="476"/>
        <end position="496"/>
    </location>
</feature>
<feature type="compositionally biased region" description="Basic and acidic residues" evidence="7">
    <location>
        <begin position="497"/>
        <end position="506"/>
    </location>
</feature>
<feature type="compositionally biased region" description="Basic residues" evidence="7">
    <location>
        <begin position="523"/>
        <end position="537"/>
    </location>
</feature>
<feature type="binding site" evidence="1">
    <location>
        <begin position="175"/>
        <end position="178"/>
    </location>
    <ligand>
        <name>GTP</name>
        <dbReference type="ChEBI" id="CHEBI:37565"/>
    </ligand>
</feature>
<feature type="binding site" evidence="1">
    <location>
        <begin position="263"/>
        <end position="268"/>
    </location>
    <ligand>
        <name>GTP</name>
        <dbReference type="ChEBI" id="CHEBI:37565"/>
    </ligand>
</feature>
<feature type="binding site" evidence="4">
    <location>
        <begin position="304"/>
        <end position="307"/>
    </location>
    <ligand>
        <name>GTP</name>
        <dbReference type="ChEBI" id="CHEBI:37565"/>
    </ligand>
</feature>
<feature type="binding site" evidence="1">
    <location>
        <position position="307"/>
    </location>
    <ligand>
        <name>GTP</name>
        <dbReference type="ChEBI" id="CHEBI:37565"/>
    </ligand>
</feature>
<feature type="sequence conflict" description="In Ref. 4; AAK96878." evidence="13" ref="4">
    <original>T</original>
    <variation>A</variation>
    <location>
        <position position="506"/>
    </location>
</feature>
<accession>Q9M8Z5</accession>
<accession>Q93Y17</accession>